<gene>
    <name evidence="1" type="primary">rpsE</name>
    <name type="ordered locus">Cphamn1_2279</name>
</gene>
<evidence type="ECO:0000255" key="1">
    <source>
        <dbReference type="HAMAP-Rule" id="MF_01307"/>
    </source>
</evidence>
<evidence type="ECO:0000305" key="2"/>
<keyword id="KW-0687">Ribonucleoprotein</keyword>
<keyword id="KW-0689">Ribosomal protein</keyword>
<keyword id="KW-0694">RNA-binding</keyword>
<keyword id="KW-0699">rRNA-binding</keyword>
<sequence>MAKRTANNIKPGELNLKEKLVHINRTAKVVKGGKRFGFNAIVVVGDKEGHVGFGLGKANEVQDAIAKGVEDGKKNVIKVPIVKGTIPHQIIARYGSAKVMMKPATPGTGLIAGGAVRAVLEMAGIHDILAKSLGSSNPHNVVKAAISGLESISDAYDVAERRSKSLKEVFES</sequence>
<name>RS5_CHLPB</name>
<proteinExistence type="inferred from homology"/>
<accession>B3EP44</accession>
<protein>
    <recommendedName>
        <fullName evidence="1">Small ribosomal subunit protein uS5</fullName>
    </recommendedName>
    <alternativeName>
        <fullName evidence="2">30S ribosomal protein S5</fullName>
    </alternativeName>
</protein>
<reference key="1">
    <citation type="submission" date="2008-06" db="EMBL/GenBank/DDBJ databases">
        <title>Complete sequence of Chlorobium phaeobacteroides BS1.</title>
        <authorList>
            <consortium name="US DOE Joint Genome Institute"/>
            <person name="Lucas S."/>
            <person name="Copeland A."/>
            <person name="Lapidus A."/>
            <person name="Glavina del Rio T."/>
            <person name="Dalin E."/>
            <person name="Tice H."/>
            <person name="Bruce D."/>
            <person name="Goodwin L."/>
            <person name="Pitluck S."/>
            <person name="Schmutz J."/>
            <person name="Larimer F."/>
            <person name="Land M."/>
            <person name="Hauser L."/>
            <person name="Kyrpides N."/>
            <person name="Ovchinnikova G."/>
            <person name="Li T."/>
            <person name="Liu Z."/>
            <person name="Zhao F."/>
            <person name="Overmann J."/>
            <person name="Bryant D.A."/>
            <person name="Richardson P."/>
        </authorList>
    </citation>
    <scope>NUCLEOTIDE SEQUENCE [LARGE SCALE GENOMIC DNA]</scope>
    <source>
        <strain>BS1</strain>
    </source>
</reference>
<comment type="function">
    <text evidence="1">With S4 and S12 plays an important role in translational accuracy.</text>
</comment>
<comment type="function">
    <text evidence="1">Located at the back of the 30S subunit body where it stabilizes the conformation of the head with respect to the body.</text>
</comment>
<comment type="subunit">
    <text evidence="1">Part of the 30S ribosomal subunit. Contacts proteins S4 and S8.</text>
</comment>
<comment type="domain">
    <text>The N-terminal domain interacts with the head of the 30S subunit; the C-terminal domain interacts with the body and contacts protein S4. The interaction surface between S4 and S5 is involved in control of translational fidelity.</text>
</comment>
<comment type="similarity">
    <text evidence="1">Belongs to the universal ribosomal protein uS5 family.</text>
</comment>
<feature type="chain" id="PRO_1000140849" description="Small ribosomal subunit protein uS5">
    <location>
        <begin position="1"/>
        <end position="172"/>
    </location>
</feature>
<feature type="domain" description="S5 DRBM" evidence="1">
    <location>
        <begin position="16"/>
        <end position="79"/>
    </location>
</feature>
<dbReference type="EMBL" id="CP001101">
    <property type="protein sequence ID" value="ACE05183.1"/>
    <property type="molecule type" value="Genomic_DNA"/>
</dbReference>
<dbReference type="SMR" id="B3EP44"/>
<dbReference type="STRING" id="331678.Cphamn1_2279"/>
<dbReference type="KEGG" id="cpb:Cphamn1_2279"/>
<dbReference type="eggNOG" id="COG0098">
    <property type="taxonomic scope" value="Bacteria"/>
</dbReference>
<dbReference type="HOGENOM" id="CLU_065898_2_2_10"/>
<dbReference type="OrthoDB" id="9809045at2"/>
<dbReference type="GO" id="GO:0015935">
    <property type="term" value="C:small ribosomal subunit"/>
    <property type="evidence" value="ECO:0007669"/>
    <property type="project" value="InterPro"/>
</dbReference>
<dbReference type="GO" id="GO:0019843">
    <property type="term" value="F:rRNA binding"/>
    <property type="evidence" value="ECO:0007669"/>
    <property type="project" value="UniProtKB-UniRule"/>
</dbReference>
<dbReference type="GO" id="GO:0003735">
    <property type="term" value="F:structural constituent of ribosome"/>
    <property type="evidence" value="ECO:0007669"/>
    <property type="project" value="InterPro"/>
</dbReference>
<dbReference type="GO" id="GO:0006412">
    <property type="term" value="P:translation"/>
    <property type="evidence" value="ECO:0007669"/>
    <property type="project" value="UniProtKB-UniRule"/>
</dbReference>
<dbReference type="FunFam" id="3.30.160.20:FF:000001">
    <property type="entry name" value="30S ribosomal protein S5"/>
    <property type="match status" value="1"/>
</dbReference>
<dbReference type="FunFam" id="3.30.230.10:FF:000002">
    <property type="entry name" value="30S ribosomal protein S5"/>
    <property type="match status" value="1"/>
</dbReference>
<dbReference type="Gene3D" id="3.30.160.20">
    <property type="match status" value="1"/>
</dbReference>
<dbReference type="Gene3D" id="3.30.230.10">
    <property type="match status" value="1"/>
</dbReference>
<dbReference type="HAMAP" id="MF_01307_B">
    <property type="entry name" value="Ribosomal_uS5_B"/>
    <property type="match status" value="1"/>
</dbReference>
<dbReference type="InterPro" id="IPR020568">
    <property type="entry name" value="Ribosomal_Su5_D2-typ_SF"/>
</dbReference>
<dbReference type="InterPro" id="IPR000851">
    <property type="entry name" value="Ribosomal_uS5"/>
</dbReference>
<dbReference type="InterPro" id="IPR005712">
    <property type="entry name" value="Ribosomal_uS5_bac-type"/>
</dbReference>
<dbReference type="InterPro" id="IPR005324">
    <property type="entry name" value="Ribosomal_uS5_C"/>
</dbReference>
<dbReference type="InterPro" id="IPR013810">
    <property type="entry name" value="Ribosomal_uS5_N"/>
</dbReference>
<dbReference type="InterPro" id="IPR018192">
    <property type="entry name" value="Ribosomal_uS5_N_CS"/>
</dbReference>
<dbReference type="InterPro" id="IPR014721">
    <property type="entry name" value="Ribsml_uS5_D2-typ_fold_subgr"/>
</dbReference>
<dbReference type="NCBIfam" id="TIGR01021">
    <property type="entry name" value="rpsE_bact"/>
    <property type="match status" value="1"/>
</dbReference>
<dbReference type="PANTHER" id="PTHR48277">
    <property type="entry name" value="MITOCHONDRIAL RIBOSOMAL PROTEIN S5"/>
    <property type="match status" value="1"/>
</dbReference>
<dbReference type="PANTHER" id="PTHR48277:SF1">
    <property type="entry name" value="MITOCHONDRIAL RIBOSOMAL PROTEIN S5"/>
    <property type="match status" value="1"/>
</dbReference>
<dbReference type="Pfam" id="PF00333">
    <property type="entry name" value="Ribosomal_S5"/>
    <property type="match status" value="1"/>
</dbReference>
<dbReference type="Pfam" id="PF03719">
    <property type="entry name" value="Ribosomal_S5_C"/>
    <property type="match status" value="1"/>
</dbReference>
<dbReference type="SUPFAM" id="SSF54768">
    <property type="entry name" value="dsRNA-binding domain-like"/>
    <property type="match status" value="1"/>
</dbReference>
<dbReference type="SUPFAM" id="SSF54211">
    <property type="entry name" value="Ribosomal protein S5 domain 2-like"/>
    <property type="match status" value="1"/>
</dbReference>
<dbReference type="PROSITE" id="PS00585">
    <property type="entry name" value="RIBOSOMAL_S5"/>
    <property type="match status" value="1"/>
</dbReference>
<dbReference type="PROSITE" id="PS50881">
    <property type="entry name" value="S5_DSRBD"/>
    <property type="match status" value="1"/>
</dbReference>
<organism>
    <name type="scientific">Chlorobium phaeobacteroides (strain BS1)</name>
    <dbReference type="NCBI Taxonomy" id="331678"/>
    <lineage>
        <taxon>Bacteria</taxon>
        <taxon>Pseudomonadati</taxon>
        <taxon>Chlorobiota</taxon>
        <taxon>Chlorobiia</taxon>
        <taxon>Chlorobiales</taxon>
        <taxon>Chlorobiaceae</taxon>
        <taxon>Chlorobium/Pelodictyon group</taxon>
        <taxon>Chlorobium</taxon>
    </lineage>
</organism>